<sequence>MKKMPMRKRFGQHFLHDSFVLQKIVSAIHPQKTDTLVEIGPGRGALTDYLLTECDNLALVEIDRDLVAFLQKKYNQQKNITIYQNDALQFDFSSVKTDKPLRVVGNLPYNISTPLLFHLFSQIHCIEDMHFMLQKEVVRRITAEVGSHDYGRLSVMAKYFCDNTYLFTVSPQAFTPPPRVESAIIRLIPRHNFTPVAKNLDQLSHVVKEAFSYRRKTVGNALKKLINPSQWPLLEINPQLRPQELTVEDFVKISNILN</sequence>
<proteinExistence type="inferred from homology"/>
<dbReference type="EC" id="2.1.1.182" evidence="1"/>
<dbReference type="EMBL" id="CP000890">
    <property type="protein sequence ID" value="ABX77894.1"/>
    <property type="molecule type" value="Genomic_DNA"/>
</dbReference>
<dbReference type="RefSeq" id="WP_012220049.1">
    <property type="nucleotide sequence ID" value="NC_010117.1"/>
</dbReference>
<dbReference type="SMR" id="A9N9I7"/>
<dbReference type="KEGG" id="cbs:COXBURSA331_A0103"/>
<dbReference type="HOGENOM" id="CLU_041220_0_1_6"/>
<dbReference type="GO" id="GO:0005829">
    <property type="term" value="C:cytosol"/>
    <property type="evidence" value="ECO:0007669"/>
    <property type="project" value="TreeGrafter"/>
</dbReference>
<dbReference type="GO" id="GO:0052908">
    <property type="term" value="F:16S rRNA (adenine(1518)-N(6)/adenine(1519)-N(6))-dimethyltransferase activity"/>
    <property type="evidence" value="ECO:0007669"/>
    <property type="project" value="UniProtKB-EC"/>
</dbReference>
<dbReference type="GO" id="GO:0003723">
    <property type="term" value="F:RNA binding"/>
    <property type="evidence" value="ECO:0007669"/>
    <property type="project" value="UniProtKB-KW"/>
</dbReference>
<dbReference type="FunFam" id="1.10.8.100:FF:000003">
    <property type="entry name" value="Ribosomal RNA small subunit methyltransferase A"/>
    <property type="match status" value="1"/>
</dbReference>
<dbReference type="FunFam" id="3.40.50.150:FF:000006">
    <property type="entry name" value="Ribosomal RNA small subunit methyltransferase A"/>
    <property type="match status" value="1"/>
</dbReference>
<dbReference type="Gene3D" id="1.10.8.100">
    <property type="entry name" value="Ribosomal RNA adenine dimethylase-like, domain 2"/>
    <property type="match status" value="1"/>
</dbReference>
<dbReference type="Gene3D" id="3.40.50.150">
    <property type="entry name" value="Vaccinia Virus protein VP39"/>
    <property type="match status" value="1"/>
</dbReference>
<dbReference type="HAMAP" id="MF_00607">
    <property type="entry name" value="16SrRNA_methyltr_A"/>
    <property type="match status" value="1"/>
</dbReference>
<dbReference type="InterPro" id="IPR001737">
    <property type="entry name" value="KsgA/Erm"/>
</dbReference>
<dbReference type="InterPro" id="IPR023165">
    <property type="entry name" value="rRNA_Ade_diMease-like_C"/>
</dbReference>
<dbReference type="InterPro" id="IPR020596">
    <property type="entry name" value="rRNA_Ade_Mease_Trfase_CS"/>
</dbReference>
<dbReference type="InterPro" id="IPR020598">
    <property type="entry name" value="rRNA_Ade_methylase_Trfase_N"/>
</dbReference>
<dbReference type="InterPro" id="IPR011530">
    <property type="entry name" value="rRNA_adenine_dimethylase"/>
</dbReference>
<dbReference type="InterPro" id="IPR029063">
    <property type="entry name" value="SAM-dependent_MTases_sf"/>
</dbReference>
<dbReference type="NCBIfam" id="TIGR00755">
    <property type="entry name" value="ksgA"/>
    <property type="match status" value="1"/>
</dbReference>
<dbReference type="PANTHER" id="PTHR11727">
    <property type="entry name" value="DIMETHYLADENOSINE TRANSFERASE"/>
    <property type="match status" value="1"/>
</dbReference>
<dbReference type="PANTHER" id="PTHR11727:SF7">
    <property type="entry name" value="DIMETHYLADENOSINE TRANSFERASE-RELATED"/>
    <property type="match status" value="1"/>
</dbReference>
<dbReference type="Pfam" id="PF00398">
    <property type="entry name" value="RrnaAD"/>
    <property type="match status" value="1"/>
</dbReference>
<dbReference type="SMART" id="SM00650">
    <property type="entry name" value="rADc"/>
    <property type="match status" value="1"/>
</dbReference>
<dbReference type="SUPFAM" id="SSF53335">
    <property type="entry name" value="S-adenosyl-L-methionine-dependent methyltransferases"/>
    <property type="match status" value="1"/>
</dbReference>
<dbReference type="PROSITE" id="PS01131">
    <property type="entry name" value="RRNA_A_DIMETH"/>
    <property type="match status" value="1"/>
</dbReference>
<dbReference type="PROSITE" id="PS51689">
    <property type="entry name" value="SAM_RNA_A_N6_MT"/>
    <property type="match status" value="1"/>
</dbReference>
<organism>
    <name type="scientific">Coxiella burnetii (strain RSA 331 / Henzerling II)</name>
    <dbReference type="NCBI Taxonomy" id="360115"/>
    <lineage>
        <taxon>Bacteria</taxon>
        <taxon>Pseudomonadati</taxon>
        <taxon>Pseudomonadota</taxon>
        <taxon>Gammaproteobacteria</taxon>
        <taxon>Legionellales</taxon>
        <taxon>Coxiellaceae</taxon>
        <taxon>Coxiella</taxon>
    </lineage>
</organism>
<gene>
    <name evidence="1" type="primary">rsmA</name>
    <name evidence="1" type="synonym">ksgA</name>
    <name type="ordered locus">COXBURSA331_A0103</name>
</gene>
<evidence type="ECO:0000255" key="1">
    <source>
        <dbReference type="HAMAP-Rule" id="MF_00607"/>
    </source>
</evidence>
<feature type="chain" id="PRO_1000130264" description="Ribosomal RNA small subunit methyltransferase A">
    <location>
        <begin position="1"/>
        <end position="258"/>
    </location>
</feature>
<feature type="binding site" evidence="1">
    <location>
        <position position="13"/>
    </location>
    <ligand>
        <name>S-adenosyl-L-methionine</name>
        <dbReference type="ChEBI" id="CHEBI:59789"/>
    </ligand>
</feature>
<feature type="binding site" evidence="1">
    <location>
        <position position="15"/>
    </location>
    <ligand>
        <name>S-adenosyl-L-methionine</name>
        <dbReference type="ChEBI" id="CHEBI:59789"/>
    </ligand>
</feature>
<feature type="binding site" evidence="1">
    <location>
        <position position="40"/>
    </location>
    <ligand>
        <name>S-adenosyl-L-methionine</name>
        <dbReference type="ChEBI" id="CHEBI:59789"/>
    </ligand>
</feature>
<feature type="binding site" evidence="1">
    <location>
        <position position="61"/>
    </location>
    <ligand>
        <name>S-adenosyl-L-methionine</name>
        <dbReference type="ChEBI" id="CHEBI:59789"/>
    </ligand>
</feature>
<feature type="binding site" evidence="1">
    <location>
        <position position="86"/>
    </location>
    <ligand>
        <name>S-adenosyl-L-methionine</name>
        <dbReference type="ChEBI" id="CHEBI:59789"/>
    </ligand>
</feature>
<feature type="binding site" evidence="1">
    <location>
        <position position="106"/>
    </location>
    <ligand>
        <name>S-adenosyl-L-methionine</name>
        <dbReference type="ChEBI" id="CHEBI:59789"/>
    </ligand>
</feature>
<accession>A9N9I7</accession>
<name>RSMA_COXBR</name>
<reference key="1">
    <citation type="submission" date="2007-11" db="EMBL/GenBank/DDBJ databases">
        <title>Genome sequencing of phylogenetically and phenotypically diverse Coxiella burnetii isolates.</title>
        <authorList>
            <person name="Seshadri R."/>
            <person name="Samuel J.E."/>
        </authorList>
    </citation>
    <scope>NUCLEOTIDE SEQUENCE [LARGE SCALE GENOMIC DNA]</scope>
    <source>
        <strain>RSA 331 / Henzerling II</strain>
    </source>
</reference>
<protein>
    <recommendedName>
        <fullName evidence="1">Ribosomal RNA small subunit methyltransferase A</fullName>
        <ecNumber evidence="1">2.1.1.182</ecNumber>
    </recommendedName>
    <alternativeName>
        <fullName evidence="1">16S rRNA (adenine(1518)-N(6)/adenine(1519)-N(6))-dimethyltransferase</fullName>
    </alternativeName>
    <alternativeName>
        <fullName evidence="1">16S rRNA dimethyladenosine transferase</fullName>
    </alternativeName>
    <alternativeName>
        <fullName evidence="1">16S rRNA dimethylase</fullName>
    </alternativeName>
    <alternativeName>
        <fullName evidence="1">S-adenosylmethionine-6-N', N'-adenosyl(rRNA) dimethyltransferase</fullName>
    </alternativeName>
</protein>
<comment type="function">
    <text evidence="1">Specifically dimethylates two adjacent adenosines (A1518 and A1519) in the loop of a conserved hairpin near the 3'-end of 16S rRNA in the 30S particle. May play a critical role in biogenesis of 30S subunits.</text>
</comment>
<comment type="catalytic activity">
    <reaction evidence="1">
        <text>adenosine(1518)/adenosine(1519) in 16S rRNA + 4 S-adenosyl-L-methionine = N(6)-dimethyladenosine(1518)/N(6)-dimethyladenosine(1519) in 16S rRNA + 4 S-adenosyl-L-homocysteine + 4 H(+)</text>
        <dbReference type="Rhea" id="RHEA:19609"/>
        <dbReference type="Rhea" id="RHEA-COMP:10232"/>
        <dbReference type="Rhea" id="RHEA-COMP:10233"/>
        <dbReference type="ChEBI" id="CHEBI:15378"/>
        <dbReference type="ChEBI" id="CHEBI:57856"/>
        <dbReference type="ChEBI" id="CHEBI:59789"/>
        <dbReference type="ChEBI" id="CHEBI:74411"/>
        <dbReference type="ChEBI" id="CHEBI:74493"/>
        <dbReference type="EC" id="2.1.1.182"/>
    </reaction>
</comment>
<comment type="subcellular location">
    <subcellularLocation>
        <location evidence="1">Cytoplasm</location>
    </subcellularLocation>
</comment>
<comment type="similarity">
    <text evidence="1">Belongs to the class I-like SAM-binding methyltransferase superfamily. rRNA adenine N(6)-methyltransferase family. RsmA subfamily.</text>
</comment>
<keyword id="KW-0963">Cytoplasm</keyword>
<keyword id="KW-0489">Methyltransferase</keyword>
<keyword id="KW-0694">RNA-binding</keyword>
<keyword id="KW-0698">rRNA processing</keyword>
<keyword id="KW-0949">S-adenosyl-L-methionine</keyword>
<keyword id="KW-0808">Transferase</keyword>